<name>GPMA_FRAAA</name>
<proteinExistence type="inferred from homology"/>
<reference key="1">
    <citation type="journal article" date="2007" name="Genome Res.">
        <title>Genome characteristics of facultatively symbiotic Frankia sp. strains reflect host range and host plant biogeography.</title>
        <authorList>
            <person name="Normand P."/>
            <person name="Lapierre P."/>
            <person name="Tisa L.S."/>
            <person name="Gogarten J.P."/>
            <person name="Alloisio N."/>
            <person name="Bagnarol E."/>
            <person name="Bassi C.A."/>
            <person name="Berry A.M."/>
            <person name="Bickhart D.M."/>
            <person name="Choisne N."/>
            <person name="Couloux A."/>
            <person name="Cournoyer B."/>
            <person name="Cruveiller S."/>
            <person name="Daubin V."/>
            <person name="Demange N."/>
            <person name="Francino M.P."/>
            <person name="Goltsman E."/>
            <person name="Huang Y."/>
            <person name="Kopp O.R."/>
            <person name="Labarre L."/>
            <person name="Lapidus A."/>
            <person name="Lavire C."/>
            <person name="Marechal J."/>
            <person name="Martinez M."/>
            <person name="Mastronunzio J.E."/>
            <person name="Mullin B.C."/>
            <person name="Niemann J."/>
            <person name="Pujic P."/>
            <person name="Rawnsley T."/>
            <person name="Rouy Z."/>
            <person name="Schenowitz C."/>
            <person name="Sellstedt A."/>
            <person name="Tavares F."/>
            <person name="Tomkins J.P."/>
            <person name="Vallenet D."/>
            <person name="Valverde C."/>
            <person name="Wall L.G."/>
            <person name="Wang Y."/>
            <person name="Medigue C."/>
            <person name="Benson D.R."/>
        </authorList>
    </citation>
    <scope>NUCLEOTIDE SEQUENCE [LARGE SCALE GENOMIC DNA]</scope>
    <source>
        <strain>DSM 45986 / CECT 9034 / ACN14a</strain>
    </source>
</reference>
<gene>
    <name evidence="1" type="primary">gpmA</name>
    <name type="ordered locus">FRAAL0964</name>
</gene>
<accession>Q0RS35</accession>
<protein>
    <recommendedName>
        <fullName evidence="1">2,3-bisphosphoglycerate-dependent phosphoglycerate mutase</fullName>
        <shortName evidence="1">BPG-dependent PGAM</shortName>
        <shortName evidence="1">PGAM</shortName>
        <shortName evidence="1">Phosphoglyceromutase</shortName>
        <shortName evidence="1">dPGM</shortName>
        <ecNumber evidence="1">5.4.2.11</ecNumber>
    </recommendedName>
</protein>
<feature type="chain" id="PRO_1000064061" description="2,3-bisphosphoglycerate-dependent phosphoglycerate mutase">
    <location>
        <begin position="1"/>
        <end position="244"/>
    </location>
</feature>
<feature type="active site" description="Tele-phosphohistidine intermediate" evidence="1">
    <location>
        <position position="9"/>
    </location>
</feature>
<feature type="active site" description="Proton donor/acceptor" evidence="1">
    <location>
        <position position="87"/>
    </location>
</feature>
<feature type="binding site" evidence="1">
    <location>
        <begin position="8"/>
        <end position="15"/>
    </location>
    <ligand>
        <name>substrate</name>
    </ligand>
</feature>
<feature type="binding site" evidence="1">
    <location>
        <begin position="21"/>
        <end position="22"/>
    </location>
    <ligand>
        <name>substrate</name>
    </ligand>
</feature>
<feature type="binding site" evidence="1">
    <location>
        <position position="60"/>
    </location>
    <ligand>
        <name>substrate</name>
    </ligand>
</feature>
<feature type="binding site" evidence="1">
    <location>
        <begin position="87"/>
        <end position="90"/>
    </location>
    <ligand>
        <name>substrate</name>
    </ligand>
</feature>
<feature type="binding site" evidence="1">
    <location>
        <position position="98"/>
    </location>
    <ligand>
        <name>substrate</name>
    </ligand>
</feature>
<feature type="binding site" evidence="1">
    <location>
        <begin position="114"/>
        <end position="115"/>
    </location>
    <ligand>
        <name>substrate</name>
    </ligand>
</feature>
<feature type="binding site" evidence="1">
    <location>
        <begin position="181"/>
        <end position="182"/>
    </location>
    <ligand>
        <name>substrate</name>
    </ligand>
</feature>
<feature type="site" description="Transition state stabilizer" evidence="1">
    <location>
        <position position="180"/>
    </location>
</feature>
<organism>
    <name type="scientific">Frankia alni (strain DSM 45986 / CECT 9034 / ACN14a)</name>
    <dbReference type="NCBI Taxonomy" id="326424"/>
    <lineage>
        <taxon>Bacteria</taxon>
        <taxon>Bacillati</taxon>
        <taxon>Actinomycetota</taxon>
        <taxon>Actinomycetes</taxon>
        <taxon>Frankiales</taxon>
        <taxon>Frankiaceae</taxon>
        <taxon>Frankia</taxon>
    </lineage>
</organism>
<evidence type="ECO:0000255" key="1">
    <source>
        <dbReference type="HAMAP-Rule" id="MF_01039"/>
    </source>
</evidence>
<keyword id="KW-0312">Gluconeogenesis</keyword>
<keyword id="KW-0324">Glycolysis</keyword>
<keyword id="KW-0413">Isomerase</keyword>
<keyword id="KW-1185">Reference proteome</keyword>
<dbReference type="EC" id="5.4.2.11" evidence="1"/>
<dbReference type="EMBL" id="CT573213">
    <property type="protein sequence ID" value="CAJ59630.1"/>
    <property type="molecule type" value="Genomic_DNA"/>
</dbReference>
<dbReference type="RefSeq" id="WP_011602193.1">
    <property type="nucleotide sequence ID" value="NC_008278.1"/>
</dbReference>
<dbReference type="SMR" id="Q0RS35"/>
<dbReference type="STRING" id="326424.FRAAL0964"/>
<dbReference type="KEGG" id="fal:FRAAL0964"/>
<dbReference type="eggNOG" id="COG0588">
    <property type="taxonomic scope" value="Bacteria"/>
</dbReference>
<dbReference type="HOGENOM" id="CLU_033323_1_1_11"/>
<dbReference type="OrthoDB" id="9781415at2"/>
<dbReference type="UniPathway" id="UPA00109">
    <property type="reaction ID" value="UER00186"/>
</dbReference>
<dbReference type="Proteomes" id="UP000000657">
    <property type="component" value="Chromosome"/>
</dbReference>
<dbReference type="GO" id="GO:0004619">
    <property type="term" value="F:phosphoglycerate mutase activity"/>
    <property type="evidence" value="ECO:0007669"/>
    <property type="project" value="UniProtKB-EC"/>
</dbReference>
<dbReference type="GO" id="GO:0006094">
    <property type="term" value="P:gluconeogenesis"/>
    <property type="evidence" value="ECO:0007669"/>
    <property type="project" value="UniProtKB-UniRule"/>
</dbReference>
<dbReference type="GO" id="GO:0006096">
    <property type="term" value="P:glycolytic process"/>
    <property type="evidence" value="ECO:0007669"/>
    <property type="project" value="UniProtKB-UniRule"/>
</dbReference>
<dbReference type="CDD" id="cd07067">
    <property type="entry name" value="HP_PGM_like"/>
    <property type="match status" value="1"/>
</dbReference>
<dbReference type="FunFam" id="3.40.50.1240:FF:000003">
    <property type="entry name" value="2,3-bisphosphoglycerate-dependent phosphoglycerate mutase"/>
    <property type="match status" value="1"/>
</dbReference>
<dbReference type="Gene3D" id="3.40.50.1240">
    <property type="entry name" value="Phosphoglycerate mutase-like"/>
    <property type="match status" value="1"/>
</dbReference>
<dbReference type="HAMAP" id="MF_01039">
    <property type="entry name" value="PGAM_GpmA"/>
    <property type="match status" value="1"/>
</dbReference>
<dbReference type="InterPro" id="IPR013078">
    <property type="entry name" value="His_Pase_superF_clade-1"/>
</dbReference>
<dbReference type="InterPro" id="IPR029033">
    <property type="entry name" value="His_PPase_superfam"/>
</dbReference>
<dbReference type="InterPro" id="IPR001345">
    <property type="entry name" value="PG/BPGM_mutase_AS"/>
</dbReference>
<dbReference type="InterPro" id="IPR005952">
    <property type="entry name" value="Phosphogly_mut1"/>
</dbReference>
<dbReference type="NCBIfam" id="TIGR01258">
    <property type="entry name" value="pgm_1"/>
    <property type="match status" value="1"/>
</dbReference>
<dbReference type="NCBIfam" id="NF010713">
    <property type="entry name" value="PRK14115.1"/>
    <property type="match status" value="1"/>
</dbReference>
<dbReference type="NCBIfam" id="NF010718">
    <property type="entry name" value="PRK14120.1"/>
    <property type="match status" value="1"/>
</dbReference>
<dbReference type="PANTHER" id="PTHR11931">
    <property type="entry name" value="PHOSPHOGLYCERATE MUTASE"/>
    <property type="match status" value="1"/>
</dbReference>
<dbReference type="Pfam" id="PF00300">
    <property type="entry name" value="His_Phos_1"/>
    <property type="match status" value="1"/>
</dbReference>
<dbReference type="PIRSF" id="PIRSF000709">
    <property type="entry name" value="6PFK_2-Ptase"/>
    <property type="match status" value="1"/>
</dbReference>
<dbReference type="SMART" id="SM00855">
    <property type="entry name" value="PGAM"/>
    <property type="match status" value="1"/>
</dbReference>
<dbReference type="SUPFAM" id="SSF53254">
    <property type="entry name" value="Phosphoglycerate mutase-like"/>
    <property type="match status" value="1"/>
</dbReference>
<dbReference type="PROSITE" id="PS00175">
    <property type="entry name" value="PG_MUTASE"/>
    <property type="match status" value="1"/>
</dbReference>
<sequence length="244" mass="26841">MTTLVLLRHGESNWNRENLFTGWVDVDLSEKGLKEATRGGELLAEAGVLPDVVHTSLLTRAIRTAWLALDAAGRTWVPVRRSWRLNERHYGGLQGLNKAETLEKFGEEQFQLWRRSYDTPPPEIGPEQVSGVDERYADLAPDLIPRTECLADVVARMLPYWYDAIVPDLRAGRTVLVAAHGNSLRALVKHLDHISDTDIAGLNIPTGIPLRYELDDDLGVLSSGYLDPDAAASAAAAVAAQGKK</sequence>
<comment type="function">
    <text evidence="1">Catalyzes the interconversion of 2-phosphoglycerate and 3-phosphoglycerate.</text>
</comment>
<comment type="catalytic activity">
    <reaction evidence="1">
        <text>(2R)-2-phosphoglycerate = (2R)-3-phosphoglycerate</text>
        <dbReference type="Rhea" id="RHEA:15901"/>
        <dbReference type="ChEBI" id="CHEBI:58272"/>
        <dbReference type="ChEBI" id="CHEBI:58289"/>
        <dbReference type="EC" id="5.4.2.11"/>
    </reaction>
</comment>
<comment type="pathway">
    <text evidence="1">Carbohydrate degradation; glycolysis; pyruvate from D-glyceraldehyde 3-phosphate: step 3/5.</text>
</comment>
<comment type="similarity">
    <text evidence="1">Belongs to the phosphoglycerate mutase family. BPG-dependent PGAM subfamily.</text>
</comment>